<reference key="1">
    <citation type="journal article" date="2004" name="Biochemistry">
        <title>Localization of the voltage-sensor toxin receptor on KvAP.</title>
        <authorList>
            <person name="Ruta V."/>
            <person name="MacKinnon R."/>
        </authorList>
    </citation>
    <scope>PROTEIN SEQUENCE</scope>
    <scope>FUNCTION</scope>
    <scope>SUBCELLULAR LOCATION</scope>
    <source>
        <tissue>Venom</tissue>
    </source>
</reference>
<keyword id="KW-0903">Direct protein sequencing</keyword>
<keyword id="KW-1015">Disulfide bond</keyword>
<keyword id="KW-0872">Ion channel impairing toxin</keyword>
<keyword id="KW-0960">Knottin</keyword>
<keyword id="KW-0528">Neurotoxin</keyword>
<keyword id="KW-0632">Potassium channel impairing toxin</keyword>
<keyword id="KW-0964">Secreted</keyword>
<keyword id="KW-0800">Toxin</keyword>
<protein>
    <recommendedName>
        <fullName evidence="4">Kappa-theraphotoxin-Gr2b</fullName>
        <shortName evidence="4">Kappa-TRTX-Gr2b</shortName>
    </recommendedName>
    <alternativeName>
        <fullName evidence="3 4">Voltage sensor toxin 2</fullName>
        <shortName evidence="3">VSTX2</shortName>
    </alternativeName>
</protein>
<evidence type="ECO:0000250" key="1">
    <source>
        <dbReference type="UniProtKB" id="P61230"/>
    </source>
</evidence>
<evidence type="ECO:0000269" key="2">
    <source>
    </source>
</evidence>
<evidence type="ECO:0000303" key="3">
    <source>
    </source>
</evidence>
<evidence type="ECO:0000305" key="4"/>
<evidence type="ECO:0000305" key="5">
    <source>
    </source>
</evidence>
<dbReference type="SMR" id="P0C2P4"/>
<dbReference type="ArachnoServer" id="AS000424">
    <property type="toxin name" value="kappa-theraphotoxin-Gr2b"/>
</dbReference>
<dbReference type="GO" id="GO:0005576">
    <property type="term" value="C:extracellular region"/>
    <property type="evidence" value="ECO:0007669"/>
    <property type="project" value="UniProtKB-SubCell"/>
</dbReference>
<dbReference type="GO" id="GO:0008200">
    <property type="term" value="F:ion channel inhibitor activity"/>
    <property type="evidence" value="ECO:0007669"/>
    <property type="project" value="InterPro"/>
</dbReference>
<dbReference type="GO" id="GO:0015459">
    <property type="term" value="F:potassium channel regulator activity"/>
    <property type="evidence" value="ECO:0007669"/>
    <property type="project" value="UniProtKB-KW"/>
</dbReference>
<dbReference type="GO" id="GO:0090729">
    <property type="term" value="F:toxin activity"/>
    <property type="evidence" value="ECO:0007669"/>
    <property type="project" value="UniProtKB-KW"/>
</dbReference>
<dbReference type="InterPro" id="IPR011696">
    <property type="entry name" value="Huwentoxin-1"/>
</dbReference>
<dbReference type="Pfam" id="PF07740">
    <property type="entry name" value="Toxin_12"/>
    <property type="match status" value="1"/>
</dbReference>
<dbReference type="SUPFAM" id="SSF57059">
    <property type="entry name" value="omega toxin-like"/>
    <property type="match status" value="1"/>
</dbReference>
<accession>P0C2P4</accession>
<proteinExistence type="evidence at protein level"/>
<feature type="peptide" id="PRO_0000283770" description="Kappa-theraphotoxin-Gr2b" evidence="2">
    <location>
        <begin position="1"/>
        <end position="32"/>
    </location>
</feature>
<feature type="disulfide bond" evidence="1">
    <location>
        <begin position="2"/>
        <end position="16"/>
    </location>
</feature>
<feature type="disulfide bond" evidence="1">
    <location>
        <begin position="9"/>
        <end position="21"/>
    </location>
</feature>
<feature type="disulfide bond" evidence="1">
    <location>
        <begin position="15"/>
        <end position="25"/>
    </location>
</feature>
<name>VSTX2_GRARO</name>
<comment type="function">
    <text evidence="2">Binds the voltage-sensor domain of the potassium channel KvAP (from the archaeon Aeropyrum pernix) and affects channel gating.</text>
</comment>
<comment type="subcellular location">
    <subcellularLocation>
        <location evidence="2">Secreted</location>
    </subcellularLocation>
</comment>
<comment type="tissue specificity">
    <text evidence="5">Expressed by the venom gland.</text>
</comment>
<comment type="domain">
    <text evidence="1">The presence of a 'disulfide through disulfide knot' structurally defines this protein as a knottin.</text>
</comment>
<comment type="similarity">
    <text evidence="4">Belongs to the neurotoxin 30 (phrixotoxin) family.</text>
</comment>
<sequence length="32" mass="3986">YCQKWMWTCDEERKCCEGLVCRLWCKKKIEEG</sequence>
<organism>
    <name type="scientific">Grammostola rosea</name>
    <name type="common">Chilean rose tarantula</name>
    <name type="synonym">Grammostola spatulata</name>
    <dbReference type="NCBI Taxonomy" id="432528"/>
    <lineage>
        <taxon>Eukaryota</taxon>
        <taxon>Metazoa</taxon>
        <taxon>Ecdysozoa</taxon>
        <taxon>Arthropoda</taxon>
        <taxon>Chelicerata</taxon>
        <taxon>Arachnida</taxon>
        <taxon>Araneae</taxon>
        <taxon>Mygalomorphae</taxon>
        <taxon>Theraphosidae</taxon>
        <taxon>Grammostola</taxon>
    </lineage>
</organism>